<evidence type="ECO:0000255" key="1">
    <source>
        <dbReference type="HAMAP-Rule" id="MF_00176"/>
    </source>
</evidence>
<name>SYS_BACC3</name>
<reference key="1">
    <citation type="submission" date="2009-02" db="EMBL/GenBank/DDBJ databases">
        <title>Genome sequence of Bacillus cereus 03BB102.</title>
        <authorList>
            <person name="Dodson R.J."/>
            <person name="Jackson P."/>
            <person name="Munk A.C."/>
            <person name="Brettin T."/>
            <person name="Bruce D."/>
            <person name="Detter C."/>
            <person name="Tapia R."/>
            <person name="Han C."/>
            <person name="Sutton G."/>
            <person name="Sims D."/>
        </authorList>
    </citation>
    <scope>NUCLEOTIDE SEQUENCE [LARGE SCALE GENOMIC DNA]</scope>
    <source>
        <strain>03BB102</strain>
    </source>
</reference>
<feature type="chain" id="PRO_1000123869" description="Serine--tRNA ligase">
    <location>
        <begin position="1"/>
        <end position="424"/>
    </location>
</feature>
<feature type="binding site" evidence="1">
    <location>
        <begin position="231"/>
        <end position="233"/>
    </location>
    <ligand>
        <name>L-serine</name>
        <dbReference type="ChEBI" id="CHEBI:33384"/>
    </ligand>
</feature>
<feature type="binding site" evidence="1">
    <location>
        <begin position="262"/>
        <end position="264"/>
    </location>
    <ligand>
        <name>ATP</name>
        <dbReference type="ChEBI" id="CHEBI:30616"/>
    </ligand>
</feature>
<feature type="binding site" evidence="1">
    <location>
        <position position="285"/>
    </location>
    <ligand>
        <name>L-serine</name>
        <dbReference type="ChEBI" id="CHEBI:33384"/>
    </ligand>
</feature>
<feature type="binding site" evidence="1">
    <location>
        <begin position="349"/>
        <end position="352"/>
    </location>
    <ligand>
        <name>ATP</name>
        <dbReference type="ChEBI" id="CHEBI:30616"/>
    </ligand>
</feature>
<feature type="binding site" evidence="1">
    <location>
        <position position="385"/>
    </location>
    <ligand>
        <name>L-serine</name>
        <dbReference type="ChEBI" id="CHEBI:33384"/>
    </ligand>
</feature>
<dbReference type="EC" id="6.1.1.11" evidence="1"/>
<dbReference type="EMBL" id="CP001407">
    <property type="protein sequence ID" value="ACO25993.1"/>
    <property type="molecule type" value="Genomic_DNA"/>
</dbReference>
<dbReference type="RefSeq" id="WP_000884181.1">
    <property type="nucleotide sequence ID" value="NZ_CP009318.1"/>
</dbReference>
<dbReference type="SMR" id="C1ES19"/>
<dbReference type="GeneID" id="69534454"/>
<dbReference type="KEGG" id="bcx:BCA_0018"/>
<dbReference type="PATRIC" id="fig|572264.18.peg.78"/>
<dbReference type="UniPathway" id="UPA00906">
    <property type="reaction ID" value="UER00895"/>
</dbReference>
<dbReference type="Proteomes" id="UP000002210">
    <property type="component" value="Chromosome"/>
</dbReference>
<dbReference type="GO" id="GO:0005737">
    <property type="term" value="C:cytoplasm"/>
    <property type="evidence" value="ECO:0007669"/>
    <property type="project" value="UniProtKB-SubCell"/>
</dbReference>
<dbReference type="GO" id="GO:0005524">
    <property type="term" value="F:ATP binding"/>
    <property type="evidence" value="ECO:0007669"/>
    <property type="project" value="UniProtKB-UniRule"/>
</dbReference>
<dbReference type="GO" id="GO:0140096">
    <property type="term" value="F:catalytic activity, acting on a protein"/>
    <property type="evidence" value="ECO:0007669"/>
    <property type="project" value="UniProtKB-ARBA"/>
</dbReference>
<dbReference type="GO" id="GO:0004828">
    <property type="term" value="F:serine-tRNA ligase activity"/>
    <property type="evidence" value="ECO:0007669"/>
    <property type="project" value="UniProtKB-UniRule"/>
</dbReference>
<dbReference type="GO" id="GO:0016740">
    <property type="term" value="F:transferase activity"/>
    <property type="evidence" value="ECO:0007669"/>
    <property type="project" value="UniProtKB-ARBA"/>
</dbReference>
<dbReference type="GO" id="GO:0016260">
    <property type="term" value="P:selenocysteine biosynthetic process"/>
    <property type="evidence" value="ECO:0007669"/>
    <property type="project" value="UniProtKB-UniRule"/>
</dbReference>
<dbReference type="GO" id="GO:0006434">
    <property type="term" value="P:seryl-tRNA aminoacylation"/>
    <property type="evidence" value="ECO:0007669"/>
    <property type="project" value="UniProtKB-UniRule"/>
</dbReference>
<dbReference type="CDD" id="cd00770">
    <property type="entry name" value="SerRS_core"/>
    <property type="match status" value="1"/>
</dbReference>
<dbReference type="Gene3D" id="3.30.930.10">
    <property type="entry name" value="Bira Bifunctional Protein, Domain 2"/>
    <property type="match status" value="1"/>
</dbReference>
<dbReference type="Gene3D" id="1.10.287.40">
    <property type="entry name" value="Serine-tRNA synthetase, tRNA binding domain"/>
    <property type="match status" value="1"/>
</dbReference>
<dbReference type="HAMAP" id="MF_00176">
    <property type="entry name" value="Ser_tRNA_synth_type1"/>
    <property type="match status" value="1"/>
</dbReference>
<dbReference type="InterPro" id="IPR002314">
    <property type="entry name" value="aa-tRNA-synt_IIb"/>
</dbReference>
<dbReference type="InterPro" id="IPR006195">
    <property type="entry name" value="aa-tRNA-synth_II"/>
</dbReference>
<dbReference type="InterPro" id="IPR045864">
    <property type="entry name" value="aa-tRNA-synth_II/BPL/LPL"/>
</dbReference>
<dbReference type="InterPro" id="IPR002317">
    <property type="entry name" value="Ser-tRNA-ligase_type_1"/>
</dbReference>
<dbReference type="InterPro" id="IPR015866">
    <property type="entry name" value="Ser-tRNA-synth_1_N"/>
</dbReference>
<dbReference type="InterPro" id="IPR042103">
    <property type="entry name" value="SerRS_1_N_sf"/>
</dbReference>
<dbReference type="InterPro" id="IPR033729">
    <property type="entry name" value="SerRS_core"/>
</dbReference>
<dbReference type="InterPro" id="IPR010978">
    <property type="entry name" value="tRNA-bd_arm"/>
</dbReference>
<dbReference type="NCBIfam" id="TIGR00414">
    <property type="entry name" value="serS"/>
    <property type="match status" value="1"/>
</dbReference>
<dbReference type="PANTHER" id="PTHR43697:SF1">
    <property type="entry name" value="SERINE--TRNA LIGASE"/>
    <property type="match status" value="1"/>
</dbReference>
<dbReference type="PANTHER" id="PTHR43697">
    <property type="entry name" value="SERYL-TRNA SYNTHETASE"/>
    <property type="match status" value="1"/>
</dbReference>
<dbReference type="Pfam" id="PF02403">
    <property type="entry name" value="Seryl_tRNA_N"/>
    <property type="match status" value="1"/>
</dbReference>
<dbReference type="Pfam" id="PF00587">
    <property type="entry name" value="tRNA-synt_2b"/>
    <property type="match status" value="1"/>
</dbReference>
<dbReference type="PIRSF" id="PIRSF001529">
    <property type="entry name" value="Ser-tRNA-synth_IIa"/>
    <property type="match status" value="1"/>
</dbReference>
<dbReference type="PRINTS" id="PR00981">
    <property type="entry name" value="TRNASYNTHSER"/>
</dbReference>
<dbReference type="SUPFAM" id="SSF55681">
    <property type="entry name" value="Class II aaRS and biotin synthetases"/>
    <property type="match status" value="1"/>
</dbReference>
<dbReference type="SUPFAM" id="SSF46589">
    <property type="entry name" value="tRNA-binding arm"/>
    <property type="match status" value="1"/>
</dbReference>
<dbReference type="PROSITE" id="PS50862">
    <property type="entry name" value="AA_TRNA_LIGASE_II"/>
    <property type="match status" value="1"/>
</dbReference>
<gene>
    <name evidence="1" type="primary">serS</name>
    <name type="ordered locus">BCA_0018</name>
</gene>
<comment type="function">
    <text evidence="1">Catalyzes the attachment of serine to tRNA(Ser). Is also able to aminoacylate tRNA(Sec) with serine, to form the misacylated tRNA L-seryl-tRNA(Sec), which will be further converted into selenocysteinyl-tRNA(Sec).</text>
</comment>
<comment type="catalytic activity">
    <reaction evidence="1">
        <text>tRNA(Ser) + L-serine + ATP = L-seryl-tRNA(Ser) + AMP + diphosphate + H(+)</text>
        <dbReference type="Rhea" id="RHEA:12292"/>
        <dbReference type="Rhea" id="RHEA-COMP:9669"/>
        <dbReference type="Rhea" id="RHEA-COMP:9703"/>
        <dbReference type="ChEBI" id="CHEBI:15378"/>
        <dbReference type="ChEBI" id="CHEBI:30616"/>
        <dbReference type="ChEBI" id="CHEBI:33019"/>
        <dbReference type="ChEBI" id="CHEBI:33384"/>
        <dbReference type="ChEBI" id="CHEBI:78442"/>
        <dbReference type="ChEBI" id="CHEBI:78533"/>
        <dbReference type="ChEBI" id="CHEBI:456215"/>
        <dbReference type="EC" id="6.1.1.11"/>
    </reaction>
</comment>
<comment type="catalytic activity">
    <reaction evidence="1">
        <text>tRNA(Sec) + L-serine + ATP = L-seryl-tRNA(Sec) + AMP + diphosphate + H(+)</text>
        <dbReference type="Rhea" id="RHEA:42580"/>
        <dbReference type="Rhea" id="RHEA-COMP:9742"/>
        <dbReference type="Rhea" id="RHEA-COMP:10128"/>
        <dbReference type="ChEBI" id="CHEBI:15378"/>
        <dbReference type="ChEBI" id="CHEBI:30616"/>
        <dbReference type="ChEBI" id="CHEBI:33019"/>
        <dbReference type="ChEBI" id="CHEBI:33384"/>
        <dbReference type="ChEBI" id="CHEBI:78442"/>
        <dbReference type="ChEBI" id="CHEBI:78533"/>
        <dbReference type="ChEBI" id="CHEBI:456215"/>
        <dbReference type="EC" id="6.1.1.11"/>
    </reaction>
</comment>
<comment type="pathway">
    <text evidence="1">Aminoacyl-tRNA biosynthesis; selenocysteinyl-tRNA(Sec) biosynthesis; L-seryl-tRNA(Sec) from L-serine and tRNA(Sec): step 1/1.</text>
</comment>
<comment type="subunit">
    <text evidence="1">Homodimer. The tRNA molecule binds across the dimer.</text>
</comment>
<comment type="subcellular location">
    <subcellularLocation>
        <location evidence="1">Cytoplasm</location>
    </subcellularLocation>
</comment>
<comment type="domain">
    <text evidence="1">Consists of two distinct domains, a catalytic core and a N-terminal extension that is involved in tRNA binding.</text>
</comment>
<comment type="similarity">
    <text evidence="1">Belongs to the class-II aminoacyl-tRNA synthetase family. Type-1 seryl-tRNA synthetase subfamily.</text>
</comment>
<organism>
    <name type="scientific">Bacillus cereus (strain 03BB102)</name>
    <dbReference type="NCBI Taxonomy" id="572264"/>
    <lineage>
        <taxon>Bacteria</taxon>
        <taxon>Bacillati</taxon>
        <taxon>Bacillota</taxon>
        <taxon>Bacilli</taxon>
        <taxon>Bacillales</taxon>
        <taxon>Bacillaceae</taxon>
        <taxon>Bacillus</taxon>
        <taxon>Bacillus cereus group</taxon>
    </lineage>
</organism>
<accession>C1ES19</accession>
<sequence length="424" mass="48744">MLDIKFLRTNFEEVKAKLQHRGEDLTDFGRFEELDTRRRELLVQTEELKSKRNEVSQQISVLKREKKDAEALILEMREVGEKVKDLDNELRTVEEDLERLMLSIPNIPHESAPVGETEDDNVVARTWGEVKEFAFEPKPHWDLATDLGILDFERAGKVTGSRFVFYKGAGARLERALISFMLDLHTDEHGYEEVLPPYMVNRASMTGTGQLPKFEEDAFRIESEDYFLIPTAEVPVTNMHRDEILNKEQLPIRYAAFSSCFRSEAGSAGRDTRGLIRQHQFNKVELVKFVKPEDSYEELEKLTNDAERVLQLLELPYRVMSMCTGDLGFTAAKKYDIEVWIPSYGTYREISSCSNFEAFQARRANIRFRREPNGKPEHVHTLNGSGLAIGRTVAAILENYQQEDGTIIIPEVLRPYMGGKTVIK</sequence>
<protein>
    <recommendedName>
        <fullName evidence="1">Serine--tRNA ligase</fullName>
        <ecNumber evidence="1">6.1.1.11</ecNumber>
    </recommendedName>
    <alternativeName>
        <fullName evidence="1">Seryl-tRNA synthetase</fullName>
        <shortName evidence="1">SerRS</shortName>
    </alternativeName>
    <alternativeName>
        <fullName evidence="1">Seryl-tRNA(Ser/Sec) synthetase</fullName>
    </alternativeName>
</protein>
<keyword id="KW-0030">Aminoacyl-tRNA synthetase</keyword>
<keyword id="KW-0067">ATP-binding</keyword>
<keyword id="KW-0963">Cytoplasm</keyword>
<keyword id="KW-0436">Ligase</keyword>
<keyword id="KW-0547">Nucleotide-binding</keyword>
<keyword id="KW-0648">Protein biosynthesis</keyword>
<proteinExistence type="inferred from homology"/>